<name>RL31_THIDA</name>
<feature type="chain" id="PRO_0000259241" description="Large ribosomal subunit protein bL31">
    <location>
        <begin position="1"/>
        <end position="68"/>
    </location>
</feature>
<feature type="binding site" evidence="1">
    <location>
        <position position="16"/>
    </location>
    <ligand>
        <name>Zn(2+)</name>
        <dbReference type="ChEBI" id="CHEBI:29105"/>
    </ligand>
</feature>
<feature type="binding site" evidence="1">
    <location>
        <position position="18"/>
    </location>
    <ligand>
        <name>Zn(2+)</name>
        <dbReference type="ChEBI" id="CHEBI:29105"/>
    </ligand>
</feature>
<feature type="binding site" evidence="1">
    <location>
        <position position="38"/>
    </location>
    <ligand>
        <name>Zn(2+)</name>
        <dbReference type="ChEBI" id="CHEBI:29105"/>
    </ligand>
</feature>
<feature type="binding site" evidence="1">
    <location>
        <position position="41"/>
    </location>
    <ligand>
        <name>Zn(2+)</name>
        <dbReference type="ChEBI" id="CHEBI:29105"/>
    </ligand>
</feature>
<gene>
    <name evidence="1" type="primary">rpmE</name>
    <name type="ordered locus">Tbd_0039</name>
</gene>
<protein>
    <recommendedName>
        <fullName evidence="1">Large ribosomal subunit protein bL31</fullName>
    </recommendedName>
    <alternativeName>
        <fullName evidence="2">50S ribosomal protein L31</fullName>
    </alternativeName>
</protein>
<reference key="1">
    <citation type="journal article" date="2006" name="J. Bacteriol.">
        <title>The genome sequence of the obligately chemolithoautotrophic, facultatively anaerobic bacterium Thiobacillus denitrificans.</title>
        <authorList>
            <person name="Beller H.R."/>
            <person name="Chain P.S."/>
            <person name="Letain T.E."/>
            <person name="Chakicherla A."/>
            <person name="Larimer F.W."/>
            <person name="Richardson P.M."/>
            <person name="Coleman M.A."/>
            <person name="Wood A.P."/>
            <person name="Kelly D.P."/>
        </authorList>
    </citation>
    <scope>NUCLEOTIDE SEQUENCE [LARGE SCALE GENOMIC DNA]</scope>
    <source>
        <strain>ATCC 25259 / T1</strain>
    </source>
</reference>
<comment type="function">
    <text evidence="1">Binds the 23S rRNA.</text>
</comment>
<comment type="cofactor">
    <cofactor evidence="1">
        <name>Zn(2+)</name>
        <dbReference type="ChEBI" id="CHEBI:29105"/>
    </cofactor>
    <text evidence="1">Binds 1 zinc ion per subunit.</text>
</comment>
<comment type="subunit">
    <text evidence="1">Part of the 50S ribosomal subunit.</text>
</comment>
<comment type="similarity">
    <text evidence="1">Belongs to the bacterial ribosomal protein bL31 family. Type A subfamily.</text>
</comment>
<proteinExistence type="inferred from homology"/>
<sequence>MKAGIHPDYNEVTVTCSCGNTFVTRSTLGKPALHVEVCASCHPFYTGKQKIVDTAGRVEKFRQRYGMK</sequence>
<dbReference type="EMBL" id="CP000116">
    <property type="protein sequence ID" value="AAZ95992.1"/>
    <property type="molecule type" value="Genomic_DNA"/>
</dbReference>
<dbReference type="RefSeq" id="WP_011310552.1">
    <property type="nucleotide sequence ID" value="NC_007404.1"/>
</dbReference>
<dbReference type="SMR" id="Q3SMP9"/>
<dbReference type="STRING" id="292415.Tbd_0039"/>
<dbReference type="KEGG" id="tbd:Tbd_0039"/>
<dbReference type="eggNOG" id="COG0254">
    <property type="taxonomic scope" value="Bacteria"/>
</dbReference>
<dbReference type="HOGENOM" id="CLU_114306_4_0_4"/>
<dbReference type="OrthoDB" id="9803251at2"/>
<dbReference type="Proteomes" id="UP000008291">
    <property type="component" value="Chromosome"/>
</dbReference>
<dbReference type="GO" id="GO:1990904">
    <property type="term" value="C:ribonucleoprotein complex"/>
    <property type="evidence" value="ECO:0007669"/>
    <property type="project" value="UniProtKB-KW"/>
</dbReference>
<dbReference type="GO" id="GO:0005840">
    <property type="term" value="C:ribosome"/>
    <property type="evidence" value="ECO:0007669"/>
    <property type="project" value="UniProtKB-KW"/>
</dbReference>
<dbReference type="GO" id="GO:0046872">
    <property type="term" value="F:metal ion binding"/>
    <property type="evidence" value="ECO:0007669"/>
    <property type="project" value="UniProtKB-KW"/>
</dbReference>
<dbReference type="GO" id="GO:0019843">
    <property type="term" value="F:rRNA binding"/>
    <property type="evidence" value="ECO:0007669"/>
    <property type="project" value="UniProtKB-KW"/>
</dbReference>
<dbReference type="GO" id="GO:0003735">
    <property type="term" value="F:structural constituent of ribosome"/>
    <property type="evidence" value="ECO:0007669"/>
    <property type="project" value="InterPro"/>
</dbReference>
<dbReference type="GO" id="GO:0006412">
    <property type="term" value="P:translation"/>
    <property type="evidence" value="ECO:0007669"/>
    <property type="project" value="UniProtKB-UniRule"/>
</dbReference>
<dbReference type="Gene3D" id="4.10.830.30">
    <property type="entry name" value="Ribosomal protein L31"/>
    <property type="match status" value="1"/>
</dbReference>
<dbReference type="HAMAP" id="MF_00501">
    <property type="entry name" value="Ribosomal_bL31_1"/>
    <property type="match status" value="1"/>
</dbReference>
<dbReference type="InterPro" id="IPR034704">
    <property type="entry name" value="Ribosomal_bL28/bL31-like_sf"/>
</dbReference>
<dbReference type="InterPro" id="IPR002150">
    <property type="entry name" value="Ribosomal_bL31"/>
</dbReference>
<dbReference type="InterPro" id="IPR027491">
    <property type="entry name" value="Ribosomal_bL31_A"/>
</dbReference>
<dbReference type="InterPro" id="IPR042105">
    <property type="entry name" value="Ribosomal_bL31_sf"/>
</dbReference>
<dbReference type="NCBIfam" id="TIGR00105">
    <property type="entry name" value="L31"/>
    <property type="match status" value="1"/>
</dbReference>
<dbReference type="NCBIfam" id="NF000612">
    <property type="entry name" value="PRK00019.1"/>
    <property type="match status" value="1"/>
</dbReference>
<dbReference type="NCBIfam" id="NF001809">
    <property type="entry name" value="PRK00528.1"/>
    <property type="match status" value="1"/>
</dbReference>
<dbReference type="PANTHER" id="PTHR33280">
    <property type="entry name" value="50S RIBOSOMAL PROTEIN L31, CHLOROPLASTIC"/>
    <property type="match status" value="1"/>
</dbReference>
<dbReference type="PANTHER" id="PTHR33280:SF6">
    <property type="entry name" value="LARGE RIBOSOMAL SUBUNIT PROTEIN BL31A"/>
    <property type="match status" value="1"/>
</dbReference>
<dbReference type="Pfam" id="PF01197">
    <property type="entry name" value="Ribosomal_L31"/>
    <property type="match status" value="1"/>
</dbReference>
<dbReference type="PRINTS" id="PR01249">
    <property type="entry name" value="RIBOSOMALL31"/>
</dbReference>
<dbReference type="SUPFAM" id="SSF143800">
    <property type="entry name" value="L28p-like"/>
    <property type="match status" value="1"/>
</dbReference>
<dbReference type="PROSITE" id="PS01143">
    <property type="entry name" value="RIBOSOMAL_L31"/>
    <property type="match status" value="1"/>
</dbReference>
<organism>
    <name type="scientific">Thiobacillus denitrificans (strain ATCC 25259 / T1)</name>
    <dbReference type="NCBI Taxonomy" id="292415"/>
    <lineage>
        <taxon>Bacteria</taxon>
        <taxon>Pseudomonadati</taxon>
        <taxon>Pseudomonadota</taxon>
        <taxon>Betaproteobacteria</taxon>
        <taxon>Nitrosomonadales</taxon>
        <taxon>Thiobacillaceae</taxon>
        <taxon>Thiobacillus</taxon>
    </lineage>
</organism>
<evidence type="ECO:0000255" key="1">
    <source>
        <dbReference type="HAMAP-Rule" id="MF_00501"/>
    </source>
</evidence>
<evidence type="ECO:0000305" key="2"/>
<accession>Q3SMP9</accession>
<keyword id="KW-0479">Metal-binding</keyword>
<keyword id="KW-1185">Reference proteome</keyword>
<keyword id="KW-0687">Ribonucleoprotein</keyword>
<keyword id="KW-0689">Ribosomal protein</keyword>
<keyword id="KW-0694">RNA-binding</keyword>
<keyword id="KW-0699">rRNA-binding</keyword>
<keyword id="KW-0862">Zinc</keyword>